<keyword id="KW-0997">Cell inner membrane</keyword>
<keyword id="KW-1003">Cell membrane</keyword>
<keyword id="KW-0444">Lipid biosynthesis</keyword>
<keyword id="KW-0443">Lipid metabolism</keyword>
<keyword id="KW-0472">Membrane</keyword>
<keyword id="KW-0594">Phospholipid biosynthesis</keyword>
<keyword id="KW-1208">Phospholipid metabolism</keyword>
<keyword id="KW-1185">Reference proteome</keyword>
<keyword id="KW-0808">Transferase</keyword>
<keyword id="KW-0812">Transmembrane</keyword>
<keyword id="KW-1133">Transmembrane helix</keyword>
<organism>
    <name type="scientific">Helicobacter hepaticus (strain ATCC 51449 / 3B1)</name>
    <dbReference type="NCBI Taxonomy" id="235279"/>
    <lineage>
        <taxon>Bacteria</taxon>
        <taxon>Pseudomonadati</taxon>
        <taxon>Campylobacterota</taxon>
        <taxon>Epsilonproteobacteria</taxon>
        <taxon>Campylobacterales</taxon>
        <taxon>Helicobacteraceae</taxon>
        <taxon>Helicobacter</taxon>
    </lineage>
</organism>
<evidence type="ECO:0000255" key="1">
    <source>
        <dbReference type="HAMAP-Rule" id="MF_01043"/>
    </source>
</evidence>
<comment type="function">
    <text evidence="1">Catalyzes the transfer of an acyl group from acyl-phosphate (acyl-PO(4)) to glycerol-3-phosphate (G3P) to form lysophosphatidic acid (LPA). This enzyme utilizes acyl-phosphate as fatty acyl donor, but not acyl-CoA or acyl-ACP.</text>
</comment>
<comment type="catalytic activity">
    <reaction evidence="1">
        <text>an acyl phosphate + sn-glycerol 3-phosphate = a 1-acyl-sn-glycero-3-phosphate + phosphate</text>
        <dbReference type="Rhea" id="RHEA:34075"/>
        <dbReference type="ChEBI" id="CHEBI:43474"/>
        <dbReference type="ChEBI" id="CHEBI:57597"/>
        <dbReference type="ChEBI" id="CHEBI:57970"/>
        <dbReference type="ChEBI" id="CHEBI:59918"/>
        <dbReference type="EC" id="2.3.1.275"/>
    </reaction>
</comment>
<comment type="pathway">
    <text evidence="1">Lipid metabolism; phospholipid metabolism.</text>
</comment>
<comment type="subunit">
    <text evidence="1">Probably interacts with PlsX.</text>
</comment>
<comment type="subcellular location">
    <subcellularLocation>
        <location evidence="1">Cell inner membrane</location>
        <topology evidence="1">Multi-pass membrane protein</topology>
    </subcellularLocation>
</comment>
<comment type="similarity">
    <text evidence="1">Belongs to the PlsY family.</text>
</comment>
<protein>
    <recommendedName>
        <fullName evidence="1">Glycerol-3-phosphate acyltransferase</fullName>
    </recommendedName>
    <alternativeName>
        <fullName evidence="1">Acyl-PO4 G3P acyltransferase</fullName>
    </alternativeName>
    <alternativeName>
        <fullName evidence="1">Acyl-phosphate--glycerol-3-phosphate acyltransferase</fullName>
    </alternativeName>
    <alternativeName>
        <fullName evidence="1">G3P acyltransferase</fullName>
        <shortName evidence="1">GPAT</shortName>
        <ecNumber evidence="1">2.3.1.275</ecNumber>
    </alternativeName>
    <alternativeName>
        <fullName evidence="1">Lysophosphatidic acid synthase</fullName>
        <shortName evidence="1">LPA synthase</shortName>
    </alternativeName>
</protein>
<proteinExistence type="inferred from homology"/>
<sequence length="224" mass="24356">MSFLSSVLYTLSNINMIFYIVAFLFGGIPFGWLLVKVLYKVDIRDIGSKSIGATNVYRAVKEIDESKAKYLSILTIILDATKGLIVVLGAKLLGMSYETQWSIALLAILGHCYSPYLGFKGGKGVATAIGSVLLLIPVEGICGLIIWGIVGKVFKISSISSLIGVLGTIGLTFVLPYILPLPDCISIIKQINTHTPLVLIGLFIFYTHIPNIKRLFSGEENKVL</sequence>
<reference key="1">
    <citation type="journal article" date="2003" name="Proc. Natl. Acad. Sci. U.S.A.">
        <title>The complete genome sequence of the carcinogenic bacterium Helicobacter hepaticus.</title>
        <authorList>
            <person name="Suerbaum S."/>
            <person name="Josenhans C."/>
            <person name="Sterzenbach T."/>
            <person name="Drescher B."/>
            <person name="Brandt P."/>
            <person name="Bell M."/>
            <person name="Droege M."/>
            <person name="Fartmann B."/>
            <person name="Fischer H.-P."/>
            <person name="Ge Z."/>
            <person name="Hoerster A."/>
            <person name="Holland R."/>
            <person name="Klein K."/>
            <person name="Koenig J."/>
            <person name="Macko L."/>
            <person name="Mendz G.L."/>
            <person name="Nyakatura G."/>
            <person name="Schauer D.B."/>
            <person name="Shen Z."/>
            <person name="Weber J."/>
            <person name="Frosch M."/>
            <person name="Fox J.G."/>
        </authorList>
    </citation>
    <scope>NUCLEOTIDE SEQUENCE [LARGE SCALE GENOMIC DNA]</scope>
    <source>
        <strain>ATCC 51449 / 3B1</strain>
    </source>
</reference>
<accession>Q7VHP1</accession>
<dbReference type="EC" id="2.3.1.275" evidence="1"/>
<dbReference type="EMBL" id="AE017125">
    <property type="protein sequence ID" value="AAP77520.1"/>
    <property type="molecule type" value="Genomic_DNA"/>
</dbReference>
<dbReference type="RefSeq" id="WP_011115763.1">
    <property type="nucleotide sequence ID" value="NC_004917.1"/>
</dbReference>
<dbReference type="SMR" id="Q7VHP1"/>
<dbReference type="STRING" id="235279.HH_0923"/>
<dbReference type="KEGG" id="hhe:HH_0923"/>
<dbReference type="eggNOG" id="COG0344">
    <property type="taxonomic scope" value="Bacteria"/>
</dbReference>
<dbReference type="HOGENOM" id="CLU_081254_2_0_7"/>
<dbReference type="OrthoDB" id="9777124at2"/>
<dbReference type="UniPathway" id="UPA00085"/>
<dbReference type="Proteomes" id="UP000002495">
    <property type="component" value="Chromosome"/>
</dbReference>
<dbReference type="GO" id="GO:0005886">
    <property type="term" value="C:plasma membrane"/>
    <property type="evidence" value="ECO:0007669"/>
    <property type="project" value="UniProtKB-SubCell"/>
</dbReference>
<dbReference type="GO" id="GO:0043772">
    <property type="term" value="F:acyl-phosphate glycerol-3-phosphate acyltransferase activity"/>
    <property type="evidence" value="ECO:0007669"/>
    <property type="project" value="UniProtKB-UniRule"/>
</dbReference>
<dbReference type="GO" id="GO:0008654">
    <property type="term" value="P:phospholipid biosynthetic process"/>
    <property type="evidence" value="ECO:0007669"/>
    <property type="project" value="UniProtKB-UniRule"/>
</dbReference>
<dbReference type="HAMAP" id="MF_01043">
    <property type="entry name" value="PlsY"/>
    <property type="match status" value="1"/>
</dbReference>
<dbReference type="InterPro" id="IPR003811">
    <property type="entry name" value="G3P_acylTferase_PlsY"/>
</dbReference>
<dbReference type="NCBIfam" id="TIGR00023">
    <property type="entry name" value="glycerol-3-phosphate 1-O-acyltransferase PlsY"/>
    <property type="match status" value="1"/>
</dbReference>
<dbReference type="PANTHER" id="PTHR30309:SF0">
    <property type="entry name" value="GLYCEROL-3-PHOSPHATE ACYLTRANSFERASE-RELATED"/>
    <property type="match status" value="1"/>
</dbReference>
<dbReference type="PANTHER" id="PTHR30309">
    <property type="entry name" value="INNER MEMBRANE PROTEIN YGIH"/>
    <property type="match status" value="1"/>
</dbReference>
<dbReference type="Pfam" id="PF02660">
    <property type="entry name" value="G3P_acyltransf"/>
    <property type="match status" value="1"/>
</dbReference>
<dbReference type="SMART" id="SM01207">
    <property type="entry name" value="G3P_acyltransf"/>
    <property type="match status" value="1"/>
</dbReference>
<gene>
    <name evidence="1" type="primary">plsY</name>
    <name type="ordered locus">HH_0923</name>
</gene>
<feature type="chain" id="PRO_0000188380" description="Glycerol-3-phosphate acyltransferase">
    <location>
        <begin position="1"/>
        <end position="224"/>
    </location>
</feature>
<feature type="transmembrane region" description="Helical" evidence="1">
    <location>
        <begin position="14"/>
        <end position="34"/>
    </location>
</feature>
<feature type="transmembrane region" description="Helical" evidence="1">
    <location>
        <begin position="70"/>
        <end position="90"/>
    </location>
</feature>
<feature type="transmembrane region" description="Helical" evidence="1">
    <location>
        <begin position="99"/>
        <end position="119"/>
    </location>
</feature>
<feature type="transmembrane region" description="Helical" evidence="1">
    <location>
        <begin position="129"/>
        <end position="149"/>
    </location>
</feature>
<feature type="transmembrane region" description="Helical" evidence="1">
    <location>
        <begin position="162"/>
        <end position="182"/>
    </location>
</feature>
<feature type="transmembrane region" description="Helical" evidence="1">
    <location>
        <begin position="185"/>
        <end position="205"/>
    </location>
</feature>
<name>PLSY_HELHP</name>